<accession>Q41249</accession>
<dbReference type="EC" id="1.3.1.33"/>
<dbReference type="EMBL" id="D50085">
    <property type="protein sequence ID" value="BAA21089.1"/>
    <property type="molecule type" value="mRNA"/>
</dbReference>
<dbReference type="PIR" id="JC4146">
    <property type="entry name" value="JC4146"/>
</dbReference>
<dbReference type="RefSeq" id="NP_001267713.1">
    <property type="nucleotide sequence ID" value="NM_001280784.1"/>
</dbReference>
<dbReference type="SMR" id="Q41249"/>
<dbReference type="GeneID" id="101208554"/>
<dbReference type="KEGG" id="csv:101208554"/>
<dbReference type="eggNOG" id="KOG1208">
    <property type="taxonomic scope" value="Eukaryota"/>
</dbReference>
<dbReference type="OrthoDB" id="191139at2759"/>
<dbReference type="BRENDA" id="1.3.1.33">
    <property type="organism ID" value="1733"/>
</dbReference>
<dbReference type="UniPathway" id="UPA00668"/>
<dbReference type="GO" id="GO:0009507">
    <property type="term" value="C:chloroplast"/>
    <property type="evidence" value="ECO:0007669"/>
    <property type="project" value="UniProtKB-SubCell"/>
</dbReference>
<dbReference type="GO" id="GO:0016630">
    <property type="term" value="F:protochlorophyllide reductase activity"/>
    <property type="evidence" value="ECO:0007669"/>
    <property type="project" value="UniProtKB-EC"/>
</dbReference>
<dbReference type="GO" id="GO:0015995">
    <property type="term" value="P:chlorophyll biosynthetic process"/>
    <property type="evidence" value="ECO:0007669"/>
    <property type="project" value="UniProtKB-UniPathway"/>
</dbReference>
<dbReference type="GO" id="GO:0015979">
    <property type="term" value="P:photosynthesis"/>
    <property type="evidence" value="ECO:0007669"/>
    <property type="project" value="UniProtKB-KW"/>
</dbReference>
<dbReference type="CDD" id="cd09810">
    <property type="entry name" value="LPOR_like_SDR_c_like"/>
    <property type="match status" value="1"/>
</dbReference>
<dbReference type="Gene3D" id="3.40.50.720">
    <property type="entry name" value="NAD(P)-binding Rossmann-like Domain"/>
    <property type="match status" value="1"/>
</dbReference>
<dbReference type="InterPro" id="IPR036291">
    <property type="entry name" value="NAD(P)-bd_dom_sf"/>
</dbReference>
<dbReference type="InterPro" id="IPR005979">
    <property type="entry name" value="Prochl_reduct"/>
</dbReference>
<dbReference type="InterPro" id="IPR002347">
    <property type="entry name" value="SDR_fam"/>
</dbReference>
<dbReference type="NCBIfam" id="TIGR01289">
    <property type="entry name" value="LPOR"/>
    <property type="match status" value="1"/>
</dbReference>
<dbReference type="PANTHER" id="PTHR44419:SF19">
    <property type="entry name" value="PROTOCHLOROPHYLLIDE REDUCTASE A, CHLOROPLASTIC"/>
    <property type="match status" value="1"/>
</dbReference>
<dbReference type="PANTHER" id="PTHR44419">
    <property type="entry name" value="PROTOCHLOROPHYLLIDE REDUCTASE C, CHLOROPLASTIC"/>
    <property type="match status" value="1"/>
</dbReference>
<dbReference type="Pfam" id="PF00106">
    <property type="entry name" value="adh_short"/>
    <property type="match status" value="1"/>
</dbReference>
<dbReference type="PRINTS" id="PR00081">
    <property type="entry name" value="GDHRDH"/>
</dbReference>
<dbReference type="SUPFAM" id="SSF51735">
    <property type="entry name" value="NAD(P)-binding Rossmann-fold domains"/>
    <property type="match status" value="1"/>
</dbReference>
<comment type="function">
    <text>Phototransformation of protochlorophyllide (Pchlide) to chlorophyllide (Chlide).</text>
</comment>
<comment type="catalytic activity">
    <reaction>
        <text>chlorophyllide a + NADP(+) = protochlorophyllide a + NADPH + H(+)</text>
        <dbReference type="Rhea" id="RHEA:11132"/>
        <dbReference type="ChEBI" id="CHEBI:15378"/>
        <dbReference type="ChEBI" id="CHEBI:57783"/>
        <dbReference type="ChEBI" id="CHEBI:58349"/>
        <dbReference type="ChEBI" id="CHEBI:83348"/>
        <dbReference type="ChEBI" id="CHEBI:83350"/>
        <dbReference type="EC" id="1.3.1.33"/>
    </reaction>
</comment>
<comment type="pathway">
    <text>Porphyrin-containing compound metabolism; chlorophyll biosynthesis.</text>
</comment>
<comment type="subcellular location">
    <subcellularLocation>
        <location>Plastid</location>
        <location>Chloroplast</location>
    </subcellularLocation>
</comment>
<comment type="similarity">
    <text evidence="2">Belongs to the short-chain dehydrogenases/reductases (SDR) family. POR subfamily.</text>
</comment>
<proteinExistence type="evidence at transcript level"/>
<keyword id="KW-0149">Chlorophyll biosynthesis</keyword>
<keyword id="KW-0150">Chloroplast</keyword>
<keyword id="KW-0521">NADP</keyword>
<keyword id="KW-0560">Oxidoreductase</keyword>
<keyword id="KW-0602">Photosynthesis</keyword>
<keyword id="KW-0934">Plastid</keyword>
<keyword id="KW-0809">Transit peptide</keyword>
<feature type="transit peptide" description="Chloroplast" evidence="1">
    <location>
        <begin position="1"/>
        <end position="64"/>
    </location>
</feature>
<feature type="chain" id="PRO_0000023291" description="Protochlorophyllide reductase, chloroplastic">
    <location>
        <begin position="65"/>
        <end position="398"/>
    </location>
</feature>
<evidence type="ECO:0000250" key="1"/>
<evidence type="ECO:0000305" key="2"/>
<reference key="1">
    <citation type="journal article" date="1995" name="Biochem. Biophys. Res. Commun.">
        <title>Light-enhanced gene expression of NADPH-protochlorophyllide oxidoreductase in cucumber.</title>
        <authorList>
            <person name="Kuroda H."/>
            <person name="Masuda T."/>
            <person name="Ohta H."/>
            <person name="Shioi Y."/>
            <person name="Takamiya K."/>
        </authorList>
    </citation>
    <scope>NUCLEOTIDE SEQUENCE [MRNA]</scope>
    <source>
        <strain>cv. Aonagajibai</strain>
        <tissue>Cotyledon</tissue>
    </source>
</reference>
<gene>
    <name type="primary">PORA</name>
    <name type="synonym">NPR</name>
</gene>
<organism>
    <name type="scientific">Cucumis sativus</name>
    <name type="common">Cucumber</name>
    <dbReference type="NCBI Taxonomy" id="3659"/>
    <lineage>
        <taxon>Eukaryota</taxon>
        <taxon>Viridiplantae</taxon>
        <taxon>Streptophyta</taxon>
        <taxon>Embryophyta</taxon>
        <taxon>Tracheophyta</taxon>
        <taxon>Spermatophyta</taxon>
        <taxon>Magnoliopsida</taxon>
        <taxon>eudicotyledons</taxon>
        <taxon>Gunneridae</taxon>
        <taxon>Pentapetalae</taxon>
        <taxon>rosids</taxon>
        <taxon>fabids</taxon>
        <taxon>Cucurbitales</taxon>
        <taxon>Cucurbitaceae</taxon>
        <taxon>Benincaseae</taxon>
        <taxon>Cucumis</taxon>
    </lineage>
</organism>
<protein>
    <recommendedName>
        <fullName>Protochlorophyllide reductase, chloroplastic</fullName>
        <shortName>PCR</shortName>
        <ecNumber>1.3.1.33</ecNumber>
    </recommendedName>
    <alternativeName>
        <fullName>NADPH-protochlorophyllide oxidoreductase</fullName>
        <shortName>POR</shortName>
    </alternativeName>
</protein>
<name>PORA_CUCSA</name>
<sequence>MALQAASLVSPALSIPKEGKSSVCLKDSSLFGISFSDHLKSEFSSSTLRCKRELNQQIGAIRAQTTATESPAVNKATPDGKKTLRKGSVVITGASSGLGLATAKALAETGKWHVIMACRDFLKAERAAKSAGITKENYTVMHLDLASLDSVRQFVDNFRQSGRPLDVLVCNAAVYLPTAKEPTFTAEGFELSVGTNHLGHFLLSRLLLEDLNKSSYPSKRLIIVGSITGNTNTLAGNVPPKANLGDLRGLAGGLNGLKSSMIDGGEFDGAKAYKDSKVCNMLTMQEFHKRYHEETGITFASLYPGCIATTGLFREHIPLFRILFPPFQKFITQGYVSEDEAGKRLAQVVSEPSLTKSGVYWSWNKNSASFENQLSQEASDAEKARKVWELSEKLVGLA</sequence>